<protein>
    <recommendedName>
        <fullName evidence="1">S-adenosylmethionine:tRNA ribosyltransferase-isomerase</fullName>
        <ecNumber evidence="1">2.4.99.17</ecNumber>
    </recommendedName>
    <alternativeName>
        <fullName evidence="1">Queuosine biosynthesis protein QueA</fullName>
    </alternativeName>
</protein>
<comment type="function">
    <text evidence="1">Transfers and isomerizes the ribose moiety from AdoMet to the 7-aminomethyl group of 7-deazaguanine (preQ1-tRNA) to give epoxyqueuosine (oQ-tRNA).</text>
</comment>
<comment type="catalytic activity">
    <reaction evidence="1">
        <text>7-aminomethyl-7-carbaguanosine(34) in tRNA + S-adenosyl-L-methionine = epoxyqueuosine(34) in tRNA + adenine + L-methionine + 2 H(+)</text>
        <dbReference type="Rhea" id="RHEA:32155"/>
        <dbReference type="Rhea" id="RHEA-COMP:10342"/>
        <dbReference type="Rhea" id="RHEA-COMP:18582"/>
        <dbReference type="ChEBI" id="CHEBI:15378"/>
        <dbReference type="ChEBI" id="CHEBI:16708"/>
        <dbReference type="ChEBI" id="CHEBI:57844"/>
        <dbReference type="ChEBI" id="CHEBI:59789"/>
        <dbReference type="ChEBI" id="CHEBI:82833"/>
        <dbReference type="ChEBI" id="CHEBI:194443"/>
        <dbReference type="EC" id="2.4.99.17"/>
    </reaction>
</comment>
<comment type="pathway">
    <text evidence="1">tRNA modification; tRNA-queuosine biosynthesis.</text>
</comment>
<comment type="subunit">
    <text evidence="1">Monomer.</text>
</comment>
<comment type="subcellular location">
    <subcellularLocation>
        <location evidence="1">Cytoplasm</location>
    </subcellularLocation>
</comment>
<comment type="similarity">
    <text evidence="1">Belongs to the QueA family.</text>
</comment>
<feature type="chain" id="PRO_0000231372" description="S-adenosylmethionine:tRNA ribosyltransferase-isomerase">
    <location>
        <begin position="1"/>
        <end position="356"/>
    </location>
</feature>
<reference key="1">
    <citation type="journal article" date="2005" name="Nucleic Acids Res.">
        <title>Genome dynamics and diversity of Shigella species, the etiologic agents of bacillary dysentery.</title>
        <authorList>
            <person name="Yang F."/>
            <person name="Yang J."/>
            <person name="Zhang X."/>
            <person name="Chen L."/>
            <person name="Jiang Y."/>
            <person name="Yan Y."/>
            <person name="Tang X."/>
            <person name="Wang J."/>
            <person name="Xiong Z."/>
            <person name="Dong J."/>
            <person name="Xue Y."/>
            <person name="Zhu Y."/>
            <person name="Xu X."/>
            <person name="Sun L."/>
            <person name="Chen S."/>
            <person name="Nie H."/>
            <person name="Peng J."/>
            <person name="Xu J."/>
            <person name="Wang Y."/>
            <person name="Yuan Z."/>
            <person name="Wen Y."/>
            <person name="Yao Z."/>
            <person name="Shen Y."/>
            <person name="Qiang B."/>
            <person name="Hou Y."/>
            <person name="Yu J."/>
            <person name="Jin Q."/>
        </authorList>
    </citation>
    <scope>NUCLEOTIDE SEQUENCE [LARGE SCALE GENOMIC DNA]</scope>
    <source>
        <strain>Sd197</strain>
    </source>
</reference>
<organism>
    <name type="scientific">Shigella dysenteriae serotype 1 (strain Sd197)</name>
    <dbReference type="NCBI Taxonomy" id="300267"/>
    <lineage>
        <taxon>Bacteria</taxon>
        <taxon>Pseudomonadati</taxon>
        <taxon>Pseudomonadota</taxon>
        <taxon>Gammaproteobacteria</taxon>
        <taxon>Enterobacterales</taxon>
        <taxon>Enterobacteriaceae</taxon>
        <taxon>Shigella</taxon>
    </lineage>
</organism>
<sequence length="356" mass="39431">MRVTDFSFELPESLIAHYPMPERSSCRLLSLDGPTGALTHGTFTDLLDKLNPGDLLVFNNTRVIPARLFGRKASGGKIEVLVERMLDDKRILAHIRASKAPKPGAELLLGDDESINATMTARHGALFEVEFNDERSVLDILNSIGHMPLPPYIDRPDEDADRELYQTVYSEKPGAVAAPTAGLHFDEPLLEKLRAKGVEMAFVTLHVGAGTFQPVRVDTIEDHIMHSEYAEVPQDVVDAVLAAKARGNRVIAVGTTSVRSLESAAQAAKNDLIEPFFDDTQIFIYPGFQYKVVDALVTNFHLPESTLIMLVSAFAGYQHTMNAYKAAVEEKYRFFSYGDAMFITYNPQAINERVGE</sequence>
<gene>
    <name evidence="1" type="primary">queA</name>
    <name type="ordered locus">SDY_0329</name>
</gene>
<keyword id="KW-0963">Cytoplasm</keyword>
<keyword id="KW-0671">Queuosine biosynthesis</keyword>
<keyword id="KW-1185">Reference proteome</keyword>
<keyword id="KW-0949">S-adenosyl-L-methionine</keyword>
<keyword id="KW-0808">Transferase</keyword>
<proteinExistence type="inferred from homology"/>
<name>QUEA_SHIDS</name>
<evidence type="ECO:0000255" key="1">
    <source>
        <dbReference type="HAMAP-Rule" id="MF_00113"/>
    </source>
</evidence>
<accession>Q32JF9</accession>
<dbReference type="EC" id="2.4.99.17" evidence="1"/>
<dbReference type="EMBL" id="CP000034">
    <property type="protein sequence ID" value="ABB60548.1"/>
    <property type="molecule type" value="Genomic_DNA"/>
</dbReference>
<dbReference type="RefSeq" id="WP_001266503.1">
    <property type="nucleotide sequence ID" value="NC_007606.1"/>
</dbReference>
<dbReference type="RefSeq" id="YP_402037.1">
    <property type="nucleotide sequence ID" value="NC_007606.1"/>
</dbReference>
<dbReference type="SMR" id="Q32JF9"/>
<dbReference type="STRING" id="300267.SDY_0329"/>
<dbReference type="EnsemblBacteria" id="ABB60548">
    <property type="protein sequence ID" value="ABB60548"/>
    <property type="gene ID" value="SDY_0329"/>
</dbReference>
<dbReference type="GeneID" id="93777055"/>
<dbReference type="KEGG" id="sdy:SDY_0329"/>
<dbReference type="PATRIC" id="fig|300267.13.peg.378"/>
<dbReference type="HOGENOM" id="CLU_039110_1_0_6"/>
<dbReference type="UniPathway" id="UPA00392"/>
<dbReference type="Proteomes" id="UP000002716">
    <property type="component" value="Chromosome"/>
</dbReference>
<dbReference type="GO" id="GO:0005737">
    <property type="term" value="C:cytoplasm"/>
    <property type="evidence" value="ECO:0007669"/>
    <property type="project" value="UniProtKB-SubCell"/>
</dbReference>
<dbReference type="GO" id="GO:0051075">
    <property type="term" value="F:S-adenosylmethionine:tRNA ribosyltransferase-isomerase activity"/>
    <property type="evidence" value="ECO:0007669"/>
    <property type="project" value="UniProtKB-EC"/>
</dbReference>
<dbReference type="GO" id="GO:0008616">
    <property type="term" value="P:queuosine biosynthetic process"/>
    <property type="evidence" value="ECO:0007669"/>
    <property type="project" value="UniProtKB-UniRule"/>
</dbReference>
<dbReference type="GO" id="GO:0002099">
    <property type="term" value="P:tRNA wobble guanine modification"/>
    <property type="evidence" value="ECO:0007669"/>
    <property type="project" value="TreeGrafter"/>
</dbReference>
<dbReference type="FunFam" id="2.40.10.240:FF:000001">
    <property type="entry name" value="S-adenosylmethionine:tRNA ribosyltransferase-isomerase"/>
    <property type="match status" value="1"/>
</dbReference>
<dbReference type="FunFam" id="3.40.1780.10:FF:000001">
    <property type="entry name" value="S-adenosylmethionine:tRNA ribosyltransferase-isomerase"/>
    <property type="match status" value="1"/>
</dbReference>
<dbReference type="Gene3D" id="2.40.10.240">
    <property type="entry name" value="QueA-like"/>
    <property type="match status" value="1"/>
</dbReference>
<dbReference type="Gene3D" id="3.40.1780.10">
    <property type="entry name" value="QueA-like"/>
    <property type="match status" value="1"/>
</dbReference>
<dbReference type="HAMAP" id="MF_00113">
    <property type="entry name" value="QueA"/>
    <property type="match status" value="1"/>
</dbReference>
<dbReference type="InterPro" id="IPR003699">
    <property type="entry name" value="QueA"/>
</dbReference>
<dbReference type="InterPro" id="IPR042118">
    <property type="entry name" value="QueA_dom1"/>
</dbReference>
<dbReference type="InterPro" id="IPR042119">
    <property type="entry name" value="QueA_dom2"/>
</dbReference>
<dbReference type="InterPro" id="IPR036100">
    <property type="entry name" value="QueA_sf"/>
</dbReference>
<dbReference type="NCBIfam" id="NF001140">
    <property type="entry name" value="PRK00147.1"/>
    <property type="match status" value="1"/>
</dbReference>
<dbReference type="NCBIfam" id="TIGR00113">
    <property type="entry name" value="queA"/>
    <property type="match status" value="1"/>
</dbReference>
<dbReference type="PANTHER" id="PTHR30307">
    <property type="entry name" value="S-ADENOSYLMETHIONINE:TRNA RIBOSYLTRANSFERASE-ISOMERASE"/>
    <property type="match status" value="1"/>
</dbReference>
<dbReference type="PANTHER" id="PTHR30307:SF0">
    <property type="entry name" value="S-ADENOSYLMETHIONINE:TRNA RIBOSYLTRANSFERASE-ISOMERASE"/>
    <property type="match status" value="1"/>
</dbReference>
<dbReference type="Pfam" id="PF02547">
    <property type="entry name" value="Queuosine_synth"/>
    <property type="match status" value="1"/>
</dbReference>
<dbReference type="SUPFAM" id="SSF111337">
    <property type="entry name" value="QueA-like"/>
    <property type="match status" value="1"/>
</dbReference>